<name>MLTC_ECOLI</name>
<evidence type="ECO:0000255" key="1">
    <source>
        <dbReference type="HAMAP-Rule" id="MF_01616"/>
    </source>
</evidence>
<evidence type="ECO:0000269" key="2">
    <source>
    </source>
</evidence>
<evidence type="ECO:0000305" key="3"/>
<evidence type="ECO:0007829" key="4">
    <source>
        <dbReference type="PDB" id="4CFO"/>
    </source>
</evidence>
<evidence type="ECO:0007829" key="5">
    <source>
        <dbReference type="PDB" id="4CFP"/>
    </source>
</evidence>
<gene>
    <name evidence="1" type="primary">mltC</name>
    <name type="synonym">yggZ</name>
    <name type="ordered locus">b2963</name>
    <name type="ordered locus">JW5481</name>
</gene>
<sequence length="359" mass="40113">MKKYLALALIAPLLISCSTTKKGDTYNEAWVKDTNGFDILMGQFAHNIENIWGFKEVVIAGPKDYVKYTDQYQTRSHINFDDGTITIETIAGTEPAAHLRRAIIKTLLMGDDPSSVDLYSDVDDITISKEPFLYGQVVDNTGQPIRWEGRASNFADYLLKNRLKSRSNGLRIIYSVTINMVPNHLDKRAHKYLGMVRQASRKYGVDESLILAIMQTESSFNPYAVSRSDALGLMQVVQHTAGKDVFRSQGKSGTPSRSFLFDPASNIDTGTAYLAMLNNVYLGGIDNPTSRRYAVITAYNGGAGSVLRVFSNDKIQAANIINTMTPGDVYQTLTTRHPSAESRRYLYKVNTAQKSYRRR</sequence>
<organism>
    <name type="scientific">Escherichia coli (strain K12)</name>
    <dbReference type="NCBI Taxonomy" id="83333"/>
    <lineage>
        <taxon>Bacteria</taxon>
        <taxon>Pseudomonadati</taxon>
        <taxon>Pseudomonadota</taxon>
        <taxon>Gammaproteobacteria</taxon>
        <taxon>Enterobacterales</taxon>
        <taxon>Enterobacteriaceae</taxon>
        <taxon>Escherichia</taxon>
    </lineage>
</organism>
<proteinExistence type="evidence at protein level"/>
<feature type="signal peptide" evidence="1">
    <location>
        <begin position="1"/>
        <end position="16"/>
    </location>
</feature>
<feature type="chain" id="PRO_0000032785" description="Membrane-bound lytic murein transglycosylase C">
    <location>
        <begin position="17"/>
        <end position="359"/>
    </location>
</feature>
<feature type="lipid moiety-binding region" description="N-palmitoyl cysteine" evidence="1">
    <location>
        <position position="17"/>
    </location>
</feature>
<feature type="lipid moiety-binding region" description="S-diacylglycerol cysteine" evidence="1">
    <location>
        <position position="17"/>
    </location>
</feature>
<feature type="helix" evidence="5">
    <location>
        <begin position="36"/>
        <end position="52"/>
    </location>
</feature>
<feature type="helix" evidence="5">
    <location>
        <begin position="54"/>
        <end position="56"/>
    </location>
</feature>
<feature type="strand" evidence="5">
    <location>
        <begin position="62"/>
        <end position="69"/>
    </location>
</feature>
<feature type="turn" evidence="5">
    <location>
        <begin position="70"/>
        <end position="73"/>
    </location>
</feature>
<feature type="strand" evidence="5">
    <location>
        <begin position="74"/>
        <end position="79"/>
    </location>
</feature>
<feature type="turn" evidence="5">
    <location>
        <begin position="80"/>
        <end position="83"/>
    </location>
</feature>
<feature type="strand" evidence="5">
    <location>
        <begin position="84"/>
        <end position="89"/>
    </location>
</feature>
<feature type="helix" evidence="5">
    <location>
        <begin position="95"/>
        <end position="108"/>
    </location>
</feature>
<feature type="helix" evidence="5">
    <location>
        <begin position="113"/>
        <end position="115"/>
    </location>
</feature>
<feature type="strand" evidence="4">
    <location>
        <begin position="120"/>
        <end position="122"/>
    </location>
</feature>
<feature type="strand" evidence="4">
    <location>
        <begin position="129"/>
        <end position="131"/>
    </location>
</feature>
<feature type="strand" evidence="4">
    <location>
        <begin position="140"/>
        <end position="142"/>
    </location>
</feature>
<feature type="helix" evidence="5">
    <location>
        <begin position="148"/>
        <end position="161"/>
    </location>
</feature>
<feature type="strand" evidence="5">
    <location>
        <begin position="164"/>
        <end position="167"/>
    </location>
</feature>
<feature type="strand" evidence="5">
    <location>
        <begin position="169"/>
        <end position="179"/>
    </location>
</feature>
<feature type="helix" evidence="5">
    <location>
        <begin position="184"/>
        <end position="190"/>
    </location>
</feature>
<feature type="helix" evidence="5">
    <location>
        <begin position="193"/>
        <end position="203"/>
    </location>
</feature>
<feature type="helix" evidence="5">
    <location>
        <begin position="207"/>
        <end position="218"/>
    </location>
</feature>
<feature type="turn" evidence="5">
    <location>
        <begin position="232"/>
        <end position="235"/>
    </location>
</feature>
<feature type="turn" evidence="5">
    <location>
        <begin position="238"/>
        <end position="240"/>
    </location>
</feature>
<feature type="helix" evidence="5">
    <location>
        <begin position="241"/>
        <end position="247"/>
    </location>
</feature>
<feature type="turn" evidence="5">
    <location>
        <begin position="248"/>
        <end position="250"/>
    </location>
</feature>
<feature type="helix" evidence="5">
    <location>
        <begin position="257"/>
        <end position="260"/>
    </location>
</feature>
<feature type="helix" evidence="5">
    <location>
        <begin position="263"/>
        <end position="279"/>
    </location>
</feature>
<feature type="turn" evidence="5">
    <location>
        <begin position="280"/>
        <end position="284"/>
    </location>
</feature>
<feature type="helix" evidence="5">
    <location>
        <begin position="288"/>
        <end position="301"/>
    </location>
</feature>
<feature type="helix" evidence="5">
    <location>
        <begin position="303"/>
        <end position="307"/>
    </location>
</feature>
<feature type="turn" evidence="5">
    <location>
        <begin position="308"/>
        <end position="310"/>
    </location>
</feature>
<feature type="helix" evidence="5">
    <location>
        <begin position="314"/>
        <end position="321"/>
    </location>
</feature>
<feature type="helix" evidence="5">
    <location>
        <begin position="326"/>
        <end position="335"/>
    </location>
</feature>
<feature type="helix" evidence="5">
    <location>
        <begin position="340"/>
        <end position="357"/>
    </location>
</feature>
<keyword id="KW-0002">3D-structure</keyword>
<keyword id="KW-0998">Cell outer membrane</keyword>
<keyword id="KW-0961">Cell wall biogenesis/degradation</keyword>
<keyword id="KW-0449">Lipoprotein</keyword>
<keyword id="KW-0456">Lyase</keyword>
<keyword id="KW-0472">Membrane</keyword>
<keyword id="KW-0564">Palmitate</keyword>
<keyword id="KW-1185">Reference proteome</keyword>
<keyword id="KW-0732">Signal</keyword>
<protein>
    <recommendedName>
        <fullName evidence="1">Membrane-bound lytic murein transglycosylase C</fullName>
        <ecNumber evidence="1">4.2.2.n1</ecNumber>
    </recommendedName>
    <alternativeName>
        <fullName evidence="1">Murein lyase C</fullName>
    </alternativeName>
</protein>
<dbReference type="EC" id="4.2.2.n1" evidence="1"/>
<dbReference type="EMBL" id="U28377">
    <property type="protein sequence ID" value="AAA69130.1"/>
    <property type="status" value="ALT_SEQ"/>
    <property type="molecule type" value="Genomic_DNA"/>
</dbReference>
<dbReference type="EMBL" id="U28377">
    <property type="protein sequence ID" value="AAA69131.1"/>
    <property type="status" value="ALT_FRAME"/>
    <property type="molecule type" value="Genomic_DNA"/>
</dbReference>
<dbReference type="EMBL" id="U00096">
    <property type="protein sequence ID" value="AAC76000.2"/>
    <property type="molecule type" value="Genomic_DNA"/>
</dbReference>
<dbReference type="EMBL" id="AP009048">
    <property type="protein sequence ID" value="BAE77026.1"/>
    <property type="molecule type" value="Genomic_DNA"/>
</dbReference>
<dbReference type="EMBL" id="U59902">
    <property type="protein sequence ID" value="AAC44296.1"/>
    <property type="molecule type" value="Genomic_DNA"/>
</dbReference>
<dbReference type="PIR" id="B65082">
    <property type="entry name" value="B65082"/>
</dbReference>
<dbReference type="RefSeq" id="NP_417438.2">
    <property type="nucleotide sequence ID" value="NC_000913.3"/>
</dbReference>
<dbReference type="RefSeq" id="WP_000760323.1">
    <property type="nucleotide sequence ID" value="NZ_STEB01000001.1"/>
</dbReference>
<dbReference type="PDB" id="4C5F">
    <property type="method" value="X-ray"/>
    <property type="resolution" value="2.34 A"/>
    <property type="chains" value="A/B=20-359"/>
</dbReference>
<dbReference type="PDB" id="4CFO">
    <property type="method" value="X-ray"/>
    <property type="resolution" value="2.90 A"/>
    <property type="chains" value="A/B=20-359"/>
</dbReference>
<dbReference type="PDB" id="4CFP">
    <property type="method" value="X-ray"/>
    <property type="resolution" value="2.15 A"/>
    <property type="chains" value="A/B=20-359"/>
</dbReference>
<dbReference type="PDB" id="4CHX">
    <property type="method" value="X-ray"/>
    <property type="resolution" value="2.45 A"/>
    <property type="chains" value="A/B=20-359"/>
</dbReference>
<dbReference type="PDBsum" id="4C5F"/>
<dbReference type="PDBsum" id="4CFO"/>
<dbReference type="PDBsum" id="4CFP"/>
<dbReference type="PDBsum" id="4CHX"/>
<dbReference type="SMR" id="P0C066"/>
<dbReference type="BioGRID" id="4262361">
    <property type="interactions" value="452"/>
</dbReference>
<dbReference type="FunCoup" id="P0C066">
    <property type="interactions" value="22"/>
</dbReference>
<dbReference type="STRING" id="511145.b2963"/>
<dbReference type="CAZy" id="GH23">
    <property type="family name" value="Glycoside Hydrolase Family 23"/>
</dbReference>
<dbReference type="jPOST" id="P0C066"/>
<dbReference type="PaxDb" id="511145-b2963"/>
<dbReference type="EnsemblBacteria" id="AAC76000">
    <property type="protein sequence ID" value="AAC76000"/>
    <property type="gene ID" value="b2963"/>
</dbReference>
<dbReference type="GeneID" id="86861053"/>
<dbReference type="GeneID" id="945428"/>
<dbReference type="KEGG" id="ecj:JW5481"/>
<dbReference type="KEGG" id="eco:b2963"/>
<dbReference type="KEGG" id="ecoc:C3026_16215"/>
<dbReference type="PATRIC" id="fig|1411691.4.peg.3768"/>
<dbReference type="EchoBASE" id="EB2810"/>
<dbReference type="eggNOG" id="COG0741">
    <property type="taxonomic scope" value="Bacteria"/>
</dbReference>
<dbReference type="HOGENOM" id="CLU_044583_0_0_6"/>
<dbReference type="InParanoid" id="P0C066"/>
<dbReference type="OMA" id="AIMQIES"/>
<dbReference type="OrthoDB" id="5620293at2"/>
<dbReference type="PhylomeDB" id="P0C066"/>
<dbReference type="BioCyc" id="EcoCyc:G7533-MONOMER"/>
<dbReference type="BioCyc" id="MetaCyc:G7533-MONOMER"/>
<dbReference type="EvolutionaryTrace" id="P0C066"/>
<dbReference type="PRO" id="PR:P0C066"/>
<dbReference type="Proteomes" id="UP000000625">
    <property type="component" value="Chromosome"/>
</dbReference>
<dbReference type="GO" id="GO:0009279">
    <property type="term" value="C:cell outer membrane"/>
    <property type="evidence" value="ECO:0007669"/>
    <property type="project" value="UniProtKB-SubCell"/>
</dbReference>
<dbReference type="GO" id="GO:0030288">
    <property type="term" value="C:outer membrane-bounded periplasmic space"/>
    <property type="evidence" value="ECO:0000304"/>
    <property type="project" value="EcoCyc"/>
</dbReference>
<dbReference type="GO" id="GO:0016798">
    <property type="term" value="F:hydrolase activity, acting on glycosyl bonds"/>
    <property type="evidence" value="ECO:0007669"/>
    <property type="project" value="InterPro"/>
</dbReference>
<dbReference type="GO" id="GO:0008932">
    <property type="term" value="F:lytic endotransglycosylase activity"/>
    <property type="evidence" value="ECO:0000314"/>
    <property type="project" value="EcoCyc"/>
</dbReference>
<dbReference type="GO" id="GO:0008933">
    <property type="term" value="F:peptidoglycan lytic transglycosylase activity"/>
    <property type="evidence" value="ECO:0000314"/>
    <property type="project" value="EcoCyc"/>
</dbReference>
<dbReference type="GO" id="GO:0051301">
    <property type="term" value="P:cell division"/>
    <property type="evidence" value="ECO:0000269"/>
    <property type="project" value="EcoCyc"/>
</dbReference>
<dbReference type="GO" id="GO:0016998">
    <property type="term" value="P:cell wall macromolecule catabolic process"/>
    <property type="evidence" value="ECO:0007669"/>
    <property type="project" value="UniProtKB-UniRule"/>
</dbReference>
<dbReference type="GO" id="GO:0071555">
    <property type="term" value="P:cell wall organization"/>
    <property type="evidence" value="ECO:0007669"/>
    <property type="project" value="UniProtKB-KW"/>
</dbReference>
<dbReference type="GO" id="GO:0071236">
    <property type="term" value="P:cellular response to antibiotic"/>
    <property type="evidence" value="ECO:0000269"/>
    <property type="project" value="EcoCyc"/>
</dbReference>
<dbReference type="GO" id="GO:0034599">
    <property type="term" value="P:cellular response to oxidative stress"/>
    <property type="evidence" value="ECO:0000270"/>
    <property type="project" value="EcoCyc"/>
</dbReference>
<dbReference type="GO" id="GO:0009253">
    <property type="term" value="P:peptidoglycan catabolic process"/>
    <property type="evidence" value="ECO:0000314"/>
    <property type="project" value="EcoCyc"/>
</dbReference>
<dbReference type="CDD" id="cd16893">
    <property type="entry name" value="LT_MltC_MltE"/>
    <property type="match status" value="1"/>
</dbReference>
<dbReference type="FunFam" id="1.10.530.10:FF:000002">
    <property type="entry name" value="Membrane-bound lytic murein transglycosylase C"/>
    <property type="match status" value="1"/>
</dbReference>
<dbReference type="Gene3D" id="1.10.530.10">
    <property type="match status" value="1"/>
</dbReference>
<dbReference type="HAMAP" id="MF_01616">
    <property type="entry name" value="MltC"/>
    <property type="match status" value="1"/>
</dbReference>
<dbReference type="InterPro" id="IPR023346">
    <property type="entry name" value="Lysozyme-like_dom_sf"/>
</dbReference>
<dbReference type="InterPro" id="IPR023664">
    <property type="entry name" value="Murein_transglycosylaseC"/>
</dbReference>
<dbReference type="InterPro" id="IPR024570">
    <property type="entry name" value="Murein_transglycosylaseC_N"/>
</dbReference>
<dbReference type="InterPro" id="IPR000189">
    <property type="entry name" value="Transglyc_AS"/>
</dbReference>
<dbReference type="InterPro" id="IPR008258">
    <property type="entry name" value="Transglycosylase_SLT_dom_1"/>
</dbReference>
<dbReference type="NCBIfam" id="NF008670">
    <property type="entry name" value="PRK11671.1"/>
    <property type="match status" value="1"/>
</dbReference>
<dbReference type="PANTHER" id="PTHR37423:SF2">
    <property type="entry name" value="MEMBRANE-BOUND LYTIC MUREIN TRANSGLYCOSYLASE C"/>
    <property type="match status" value="1"/>
</dbReference>
<dbReference type="PANTHER" id="PTHR37423">
    <property type="entry name" value="SOLUBLE LYTIC MUREIN TRANSGLYCOSYLASE-RELATED"/>
    <property type="match status" value="1"/>
</dbReference>
<dbReference type="Pfam" id="PF11873">
    <property type="entry name" value="Mltc_N"/>
    <property type="match status" value="1"/>
</dbReference>
<dbReference type="Pfam" id="PF01464">
    <property type="entry name" value="SLT"/>
    <property type="match status" value="1"/>
</dbReference>
<dbReference type="SUPFAM" id="SSF53955">
    <property type="entry name" value="Lysozyme-like"/>
    <property type="match status" value="1"/>
</dbReference>
<dbReference type="PROSITE" id="PS51257">
    <property type="entry name" value="PROKAR_LIPOPROTEIN"/>
    <property type="match status" value="1"/>
</dbReference>
<dbReference type="PROSITE" id="PS00922">
    <property type="entry name" value="TRANSGLYCOSYLASE"/>
    <property type="match status" value="1"/>
</dbReference>
<reference key="1">
    <citation type="journal article" date="1997" name="Science">
        <title>The complete genome sequence of Escherichia coli K-12.</title>
        <authorList>
            <person name="Blattner F.R."/>
            <person name="Plunkett G. III"/>
            <person name="Bloch C.A."/>
            <person name="Perna N.T."/>
            <person name="Burland V."/>
            <person name="Riley M."/>
            <person name="Collado-Vides J."/>
            <person name="Glasner J.D."/>
            <person name="Rode C.K."/>
            <person name="Mayhew G.F."/>
            <person name="Gregor J."/>
            <person name="Davis N.W."/>
            <person name="Kirkpatrick H.A."/>
            <person name="Goeden M.A."/>
            <person name="Rose D.J."/>
            <person name="Mau B."/>
            <person name="Shao Y."/>
        </authorList>
    </citation>
    <scope>NUCLEOTIDE SEQUENCE [LARGE SCALE GENOMIC DNA]</scope>
    <source>
        <strain>K12 / MG1655 / ATCC 47076</strain>
    </source>
</reference>
<reference key="2">
    <citation type="journal article" date="2006" name="Mol. Syst. Biol.">
        <title>Highly accurate genome sequences of Escherichia coli K-12 strains MG1655 and W3110.</title>
        <authorList>
            <person name="Hayashi K."/>
            <person name="Morooka N."/>
            <person name="Yamamoto Y."/>
            <person name="Fujita K."/>
            <person name="Isono K."/>
            <person name="Choi S."/>
            <person name="Ohtsubo E."/>
            <person name="Baba T."/>
            <person name="Wanner B.L."/>
            <person name="Mori H."/>
            <person name="Horiuchi T."/>
        </authorList>
    </citation>
    <scope>NUCLEOTIDE SEQUENCE [LARGE SCALE GENOMIC DNA]</scope>
    <source>
        <strain>K12 / W3110 / ATCC 27325 / DSM 5911</strain>
    </source>
</reference>
<reference key="3">
    <citation type="journal article" date="1996" name="Microb. Drug Resist.">
        <title>Identification of new members of the lytic transglycosylase family in Haemophilus influenzae and Escherichia coli.</title>
        <authorList>
            <person name="Dijkstra A.J."/>
            <person name="Keck W."/>
        </authorList>
    </citation>
    <scope>NUCLEOTIDE SEQUENCE [GENOMIC DNA] OF 162-200</scope>
    <scope>IDENTIFICATION</scope>
    <source>
        <strain>122-1</strain>
    </source>
</reference>
<reference key="4">
    <citation type="journal article" date="2003" name="J. Bacteriol.">
        <title>SoxRS-regulated expression and genetic analysis of the yggX gene of Escherichia coli.</title>
        <authorList>
            <person name="Pomposiello P.J."/>
            <person name="Koutsolioutsou A."/>
            <person name="Carrasco D."/>
            <person name="Demple B."/>
        </authorList>
    </citation>
    <scope>INDUCTION</scope>
    <source>
        <strain>K12 / GC4468</strain>
    </source>
</reference>
<accession>P0C066</accession>
<accession>P52066</accession>
<accession>P71274</accession>
<accession>P76651</accession>
<accession>P76652</accession>
<accession>Q2M9N0</accession>
<comment type="function">
    <text evidence="1">Murein-degrading enzyme. May play a role in recycling of muropeptides during cell elongation and/or cell division.</text>
</comment>
<comment type="catalytic activity">
    <reaction evidence="1">
        <text>Exolytic cleavage of the (1-&gt;4)-beta-glycosidic linkage between N-acetylmuramic acid (MurNAc) and N-acetylglucosamine (GlcNAc) residues in peptidoglycan, from either the reducing or the non-reducing ends of the peptidoglycan chains, with concomitant formation of a 1,6-anhydrobond in the MurNAc residue.</text>
        <dbReference type="EC" id="4.2.2.n1"/>
    </reaction>
</comment>
<comment type="subcellular location">
    <subcellularLocation>
        <location evidence="3">Cell outer membrane</location>
        <topology evidence="3">Lipid-anchor</topology>
    </subcellularLocation>
</comment>
<comment type="induction">
    <text evidence="2">By SoxS.</text>
</comment>
<comment type="similarity">
    <text evidence="1">Belongs to the transglycosylase Slt family.</text>
</comment>
<comment type="sequence caution" evidence="3">
    <conflict type="erroneous initiation">
        <sequence resource="EMBL-CDS" id="AAA69130"/>
    </conflict>
    <text>Extended N-terminus.</text>
</comment>
<comment type="sequence caution" evidence="3">
    <conflict type="frameshift">
        <sequence resource="EMBL-CDS" id="AAA69130"/>
    </conflict>
</comment>
<comment type="sequence caution" evidence="3">
    <conflict type="frameshift">
        <sequence resource="EMBL-CDS" id="AAA69131"/>
    </conflict>
</comment>